<dbReference type="EC" id="5.4.2.12" evidence="1"/>
<dbReference type="EMBL" id="CP000733">
    <property type="protein sequence ID" value="ABS78034.1"/>
    <property type="molecule type" value="Genomic_DNA"/>
</dbReference>
<dbReference type="RefSeq" id="WP_011996580.1">
    <property type="nucleotide sequence ID" value="NC_009727.1"/>
</dbReference>
<dbReference type="SMR" id="A9KF70"/>
<dbReference type="KEGG" id="cbd:CBUD_0451"/>
<dbReference type="HOGENOM" id="CLU_026099_2_0_6"/>
<dbReference type="UniPathway" id="UPA00109">
    <property type="reaction ID" value="UER00186"/>
</dbReference>
<dbReference type="Proteomes" id="UP000008555">
    <property type="component" value="Chromosome"/>
</dbReference>
<dbReference type="GO" id="GO:0005829">
    <property type="term" value="C:cytosol"/>
    <property type="evidence" value="ECO:0007669"/>
    <property type="project" value="TreeGrafter"/>
</dbReference>
<dbReference type="GO" id="GO:0030145">
    <property type="term" value="F:manganese ion binding"/>
    <property type="evidence" value="ECO:0007669"/>
    <property type="project" value="UniProtKB-UniRule"/>
</dbReference>
<dbReference type="GO" id="GO:0004619">
    <property type="term" value="F:phosphoglycerate mutase activity"/>
    <property type="evidence" value="ECO:0007669"/>
    <property type="project" value="UniProtKB-EC"/>
</dbReference>
<dbReference type="GO" id="GO:0006007">
    <property type="term" value="P:glucose catabolic process"/>
    <property type="evidence" value="ECO:0007669"/>
    <property type="project" value="InterPro"/>
</dbReference>
<dbReference type="GO" id="GO:0006096">
    <property type="term" value="P:glycolytic process"/>
    <property type="evidence" value="ECO:0007669"/>
    <property type="project" value="UniProtKB-UniRule"/>
</dbReference>
<dbReference type="CDD" id="cd16010">
    <property type="entry name" value="iPGM"/>
    <property type="match status" value="1"/>
</dbReference>
<dbReference type="FunFam" id="3.40.1450.10:FF:000001">
    <property type="entry name" value="2,3-bisphosphoglycerate-independent phosphoglycerate mutase"/>
    <property type="match status" value="1"/>
</dbReference>
<dbReference type="Gene3D" id="3.40.720.10">
    <property type="entry name" value="Alkaline Phosphatase, subunit A"/>
    <property type="match status" value="1"/>
</dbReference>
<dbReference type="Gene3D" id="3.40.1450.10">
    <property type="entry name" value="BPG-independent phosphoglycerate mutase, domain B"/>
    <property type="match status" value="1"/>
</dbReference>
<dbReference type="HAMAP" id="MF_01038">
    <property type="entry name" value="GpmI"/>
    <property type="match status" value="1"/>
</dbReference>
<dbReference type="InterPro" id="IPR017850">
    <property type="entry name" value="Alkaline_phosphatase_core_sf"/>
</dbReference>
<dbReference type="InterPro" id="IPR011258">
    <property type="entry name" value="BPG-indep_PGM_N"/>
</dbReference>
<dbReference type="InterPro" id="IPR006124">
    <property type="entry name" value="Metalloenzyme"/>
</dbReference>
<dbReference type="InterPro" id="IPR036646">
    <property type="entry name" value="PGAM_B_sf"/>
</dbReference>
<dbReference type="InterPro" id="IPR005995">
    <property type="entry name" value="Pgm_bpd_ind"/>
</dbReference>
<dbReference type="NCBIfam" id="TIGR01307">
    <property type="entry name" value="pgm_bpd_ind"/>
    <property type="match status" value="1"/>
</dbReference>
<dbReference type="PANTHER" id="PTHR31637">
    <property type="entry name" value="2,3-BISPHOSPHOGLYCERATE-INDEPENDENT PHOSPHOGLYCERATE MUTASE"/>
    <property type="match status" value="1"/>
</dbReference>
<dbReference type="PANTHER" id="PTHR31637:SF0">
    <property type="entry name" value="2,3-BISPHOSPHOGLYCERATE-INDEPENDENT PHOSPHOGLYCERATE MUTASE"/>
    <property type="match status" value="1"/>
</dbReference>
<dbReference type="Pfam" id="PF06415">
    <property type="entry name" value="iPGM_N"/>
    <property type="match status" value="1"/>
</dbReference>
<dbReference type="Pfam" id="PF01676">
    <property type="entry name" value="Metalloenzyme"/>
    <property type="match status" value="1"/>
</dbReference>
<dbReference type="PIRSF" id="PIRSF001492">
    <property type="entry name" value="IPGAM"/>
    <property type="match status" value="1"/>
</dbReference>
<dbReference type="SUPFAM" id="SSF64158">
    <property type="entry name" value="2,3-Bisphosphoglycerate-independent phosphoglycerate mutase, substrate-binding domain"/>
    <property type="match status" value="1"/>
</dbReference>
<dbReference type="SUPFAM" id="SSF53649">
    <property type="entry name" value="Alkaline phosphatase-like"/>
    <property type="match status" value="1"/>
</dbReference>
<organism>
    <name type="scientific">Coxiella burnetii (strain Dugway 5J108-111)</name>
    <dbReference type="NCBI Taxonomy" id="434922"/>
    <lineage>
        <taxon>Bacteria</taxon>
        <taxon>Pseudomonadati</taxon>
        <taxon>Pseudomonadota</taxon>
        <taxon>Gammaproteobacteria</taxon>
        <taxon>Legionellales</taxon>
        <taxon>Coxiellaceae</taxon>
        <taxon>Coxiella</taxon>
    </lineage>
</organism>
<keyword id="KW-0324">Glycolysis</keyword>
<keyword id="KW-0413">Isomerase</keyword>
<keyword id="KW-0464">Manganese</keyword>
<keyword id="KW-0479">Metal-binding</keyword>
<protein>
    <recommendedName>
        <fullName evidence="1">2,3-bisphosphoglycerate-independent phosphoglycerate mutase</fullName>
        <shortName evidence="1">BPG-independent PGAM</shortName>
        <shortName evidence="1">Phosphoglyceromutase</shortName>
        <shortName evidence="1">iPGM</shortName>
        <ecNumber evidence="1">5.4.2.12</ecNumber>
    </recommendedName>
</protein>
<comment type="function">
    <text evidence="1">Catalyzes the interconversion of 2-phosphoglycerate and 3-phosphoglycerate.</text>
</comment>
<comment type="catalytic activity">
    <reaction evidence="1">
        <text>(2R)-2-phosphoglycerate = (2R)-3-phosphoglycerate</text>
        <dbReference type="Rhea" id="RHEA:15901"/>
        <dbReference type="ChEBI" id="CHEBI:58272"/>
        <dbReference type="ChEBI" id="CHEBI:58289"/>
        <dbReference type="EC" id="5.4.2.12"/>
    </reaction>
</comment>
<comment type="cofactor">
    <cofactor evidence="1">
        <name>Mn(2+)</name>
        <dbReference type="ChEBI" id="CHEBI:29035"/>
    </cofactor>
    <text evidence="1">Binds 2 manganese ions per subunit.</text>
</comment>
<comment type="pathway">
    <text evidence="1">Carbohydrate degradation; glycolysis; pyruvate from D-glyceraldehyde 3-phosphate: step 3/5.</text>
</comment>
<comment type="subunit">
    <text evidence="1">Monomer.</text>
</comment>
<comment type="similarity">
    <text evidence="1">Belongs to the BPG-independent phosphoglycerate mutase family.</text>
</comment>
<evidence type="ECO:0000255" key="1">
    <source>
        <dbReference type="HAMAP-Rule" id="MF_01038"/>
    </source>
</evidence>
<feature type="chain" id="PRO_1000084301" description="2,3-bisphosphoglycerate-independent phosphoglycerate mutase">
    <location>
        <begin position="1"/>
        <end position="519"/>
    </location>
</feature>
<feature type="active site" description="Phosphoserine intermediate" evidence="1">
    <location>
        <position position="68"/>
    </location>
</feature>
<feature type="binding site" evidence="1">
    <location>
        <position position="18"/>
    </location>
    <ligand>
        <name>Mn(2+)</name>
        <dbReference type="ChEBI" id="CHEBI:29035"/>
        <label>2</label>
    </ligand>
</feature>
<feature type="binding site" evidence="1">
    <location>
        <position position="68"/>
    </location>
    <ligand>
        <name>Mn(2+)</name>
        <dbReference type="ChEBI" id="CHEBI:29035"/>
        <label>2</label>
    </ligand>
</feature>
<feature type="binding site" evidence="1">
    <location>
        <position position="129"/>
    </location>
    <ligand>
        <name>substrate</name>
    </ligand>
</feature>
<feature type="binding site" evidence="1">
    <location>
        <begin position="159"/>
        <end position="160"/>
    </location>
    <ligand>
        <name>substrate</name>
    </ligand>
</feature>
<feature type="binding site" evidence="1">
    <location>
        <position position="191"/>
    </location>
    <ligand>
        <name>substrate</name>
    </ligand>
</feature>
<feature type="binding site" evidence="1">
    <location>
        <position position="197"/>
    </location>
    <ligand>
        <name>substrate</name>
    </ligand>
</feature>
<feature type="binding site" evidence="1">
    <location>
        <begin position="267"/>
        <end position="270"/>
    </location>
    <ligand>
        <name>substrate</name>
    </ligand>
</feature>
<feature type="binding site" evidence="1">
    <location>
        <position position="341"/>
    </location>
    <ligand>
        <name>substrate</name>
    </ligand>
</feature>
<feature type="binding site" evidence="1">
    <location>
        <position position="408"/>
    </location>
    <ligand>
        <name>Mn(2+)</name>
        <dbReference type="ChEBI" id="CHEBI:29035"/>
        <label>1</label>
    </ligand>
</feature>
<feature type="binding site" evidence="1">
    <location>
        <position position="412"/>
    </location>
    <ligand>
        <name>Mn(2+)</name>
        <dbReference type="ChEBI" id="CHEBI:29035"/>
        <label>1</label>
    </ligand>
</feature>
<feature type="binding site" evidence="1">
    <location>
        <position position="449"/>
    </location>
    <ligand>
        <name>Mn(2+)</name>
        <dbReference type="ChEBI" id="CHEBI:29035"/>
        <label>2</label>
    </ligand>
</feature>
<feature type="binding site" evidence="1">
    <location>
        <position position="450"/>
    </location>
    <ligand>
        <name>Mn(2+)</name>
        <dbReference type="ChEBI" id="CHEBI:29035"/>
        <label>2</label>
    </ligand>
</feature>
<feature type="binding site" evidence="1">
    <location>
        <position position="468"/>
    </location>
    <ligand>
        <name>Mn(2+)</name>
        <dbReference type="ChEBI" id="CHEBI:29035"/>
        <label>1</label>
    </ligand>
</feature>
<proteinExistence type="inferred from homology"/>
<reference key="1">
    <citation type="journal article" date="2009" name="Infect. Immun.">
        <title>Comparative genomics reveal extensive transposon-mediated genomic plasticity and diversity among potential effector proteins within the genus Coxiella.</title>
        <authorList>
            <person name="Beare P.A."/>
            <person name="Unsworth N."/>
            <person name="Andoh M."/>
            <person name="Voth D.E."/>
            <person name="Omsland A."/>
            <person name="Gilk S.D."/>
            <person name="Williams K.P."/>
            <person name="Sobral B.W."/>
            <person name="Kupko J.J. III"/>
            <person name="Porcella S.F."/>
            <person name="Samuel J.E."/>
            <person name="Heinzen R.A."/>
        </authorList>
    </citation>
    <scope>NUCLEOTIDE SEQUENCE [LARGE SCALE GENOMIC DNA]</scope>
    <source>
        <strain>Dugway 5J108-111</strain>
    </source>
</reference>
<gene>
    <name evidence="1" type="primary">gpmI</name>
    <name type="ordered locus">CBUD_0451</name>
</gene>
<sequence length="519" mass="57494">MTQADNQNPKPMVLIILDGFGESDETTHNAIKEANTPTLDKLFRHYPHTLLEASGRAVGLPDGQMGNSEVGHLHIGGGRKVPQDLTRIDAAIASGEFYENPALIEALEKAKALNKAVHILGLLSPGGVHSRDNQIAALVELAHRCGIKKIYLHAILDGRDTPPKSALLSIEKITDQFHAYGNGKIASLIGRYYAMDRDKRWDRTEKAYDLLTQGTAQFHAPTAKEGLMLAYEQGNTDEFVSPTSIHRHNETPITIEDGDVVVFMNFRADRARQLTYAFLDDHFTAFNRQVRPKLSAFVTLTAYAKDIHAAVAFPPLELHNTLGEYLSARGYRQLRIAETEKYAHVTYFLNGGQEAPFNGEDRLLIPSPKVATYDLQPEMSAVEMTNKLVEIIQNDDYDLIVCNFANPDMVGHTGDETATREAIQVIDDCLKRIITALQSVGGEALITADHGNAEKMFDEKTNQPHTAHTSNLVPLIYVGREAQFCKEVGALDDVAPTLLYLMGLEKPREMTGRNLITLK</sequence>
<name>GPMI_COXBN</name>
<accession>A9KF70</accession>